<organism>
    <name type="scientific">Buchnera aphidicola subsp. Acyrthosiphon pisum (strain 5A)</name>
    <dbReference type="NCBI Taxonomy" id="563178"/>
    <lineage>
        <taxon>Bacteria</taxon>
        <taxon>Pseudomonadati</taxon>
        <taxon>Pseudomonadota</taxon>
        <taxon>Gammaproteobacteria</taxon>
        <taxon>Enterobacterales</taxon>
        <taxon>Erwiniaceae</taxon>
        <taxon>Buchnera</taxon>
    </lineage>
</organism>
<dbReference type="EMBL" id="CP001161">
    <property type="protein sequence ID" value="ACL30421.1"/>
    <property type="molecule type" value="Genomic_DNA"/>
</dbReference>
<dbReference type="RefSeq" id="WP_009873998.1">
    <property type="nucleotide sequence ID" value="NC_011833.1"/>
</dbReference>
<dbReference type="SMR" id="B8D8J9"/>
<dbReference type="KEGG" id="bap:BUAP5A_036"/>
<dbReference type="HOGENOM" id="CLU_062853_0_0_6"/>
<dbReference type="OrthoDB" id="9803740at2"/>
<dbReference type="Proteomes" id="UP000006904">
    <property type="component" value="Chromosome"/>
</dbReference>
<dbReference type="GO" id="GO:0022625">
    <property type="term" value="C:cytosolic large ribosomal subunit"/>
    <property type="evidence" value="ECO:0007669"/>
    <property type="project" value="TreeGrafter"/>
</dbReference>
<dbReference type="GO" id="GO:0019843">
    <property type="term" value="F:rRNA binding"/>
    <property type="evidence" value="ECO:0007669"/>
    <property type="project" value="UniProtKB-UniRule"/>
</dbReference>
<dbReference type="GO" id="GO:0003735">
    <property type="term" value="F:structural constituent of ribosome"/>
    <property type="evidence" value="ECO:0007669"/>
    <property type="project" value="InterPro"/>
</dbReference>
<dbReference type="GO" id="GO:0000049">
    <property type="term" value="F:tRNA binding"/>
    <property type="evidence" value="ECO:0007669"/>
    <property type="project" value="UniProtKB-KW"/>
</dbReference>
<dbReference type="GO" id="GO:0006417">
    <property type="term" value="P:regulation of translation"/>
    <property type="evidence" value="ECO:0007669"/>
    <property type="project" value="UniProtKB-KW"/>
</dbReference>
<dbReference type="GO" id="GO:0006412">
    <property type="term" value="P:translation"/>
    <property type="evidence" value="ECO:0007669"/>
    <property type="project" value="UniProtKB-UniRule"/>
</dbReference>
<dbReference type="CDD" id="cd00403">
    <property type="entry name" value="Ribosomal_L1"/>
    <property type="match status" value="1"/>
</dbReference>
<dbReference type="FunFam" id="3.40.50.790:FF:000001">
    <property type="entry name" value="50S ribosomal protein L1"/>
    <property type="match status" value="1"/>
</dbReference>
<dbReference type="Gene3D" id="3.30.190.20">
    <property type="match status" value="1"/>
</dbReference>
<dbReference type="Gene3D" id="3.40.50.790">
    <property type="match status" value="1"/>
</dbReference>
<dbReference type="HAMAP" id="MF_01318_B">
    <property type="entry name" value="Ribosomal_uL1_B"/>
    <property type="match status" value="1"/>
</dbReference>
<dbReference type="InterPro" id="IPR005878">
    <property type="entry name" value="Ribosom_uL1_bac-type"/>
</dbReference>
<dbReference type="InterPro" id="IPR002143">
    <property type="entry name" value="Ribosomal_uL1"/>
</dbReference>
<dbReference type="InterPro" id="IPR023674">
    <property type="entry name" value="Ribosomal_uL1-like"/>
</dbReference>
<dbReference type="InterPro" id="IPR028364">
    <property type="entry name" value="Ribosomal_uL1/biogenesis"/>
</dbReference>
<dbReference type="InterPro" id="IPR016095">
    <property type="entry name" value="Ribosomal_uL1_3-a/b-sand"/>
</dbReference>
<dbReference type="InterPro" id="IPR023673">
    <property type="entry name" value="Ribosomal_uL1_CS"/>
</dbReference>
<dbReference type="NCBIfam" id="TIGR01169">
    <property type="entry name" value="rplA_bact"/>
    <property type="match status" value="1"/>
</dbReference>
<dbReference type="PANTHER" id="PTHR36427">
    <property type="entry name" value="54S RIBOSOMAL PROTEIN L1, MITOCHONDRIAL"/>
    <property type="match status" value="1"/>
</dbReference>
<dbReference type="PANTHER" id="PTHR36427:SF3">
    <property type="entry name" value="LARGE RIBOSOMAL SUBUNIT PROTEIN UL1M"/>
    <property type="match status" value="1"/>
</dbReference>
<dbReference type="Pfam" id="PF00687">
    <property type="entry name" value="Ribosomal_L1"/>
    <property type="match status" value="1"/>
</dbReference>
<dbReference type="PIRSF" id="PIRSF002155">
    <property type="entry name" value="Ribosomal_L1"/>
    <property type="match status" value="1"/>
</dbReference>
<dbReference type="SUPFAM" id="SSF56808">
    <property type="entry name" value="Ribosomal protein L1"/>
    <property type="match status" value="1"/>
</dbReference>
<dbReference type="PROSITE" id="PS01199">
    <property type="entry name" value="RIBOSOMAL_L1"/>
    <property type="match status" value="1"/>
</dbReference>
<comment type="function">
    <text evidence="1">Binds directly to 23S rRNA. The L1 stalk is quite mobile in the ribosome, and is involved in E site tRNA release.</text>
</comment>
<comment type="function">
    <text evidence="1">Protein L1 is also a translational repressor protein, it controls the translation of the L11 operon by binding to its mRNA.</text>
</comment>
<comment type="subunit">
    <text evidence="1">Part of the 50S ribosomal subunit.</text>
</comment>
<comment type="similarity">
    <text evidence="1">Belongs to the universal ribosomal protein uL1 family.</text>
</comment>
<sequence length="231" mass="25543">MNKKTKRMKKIKEHINFEKLHHIDETIDLLKKSSTVKFNESIDIAINLGINSKKSDQNIRSSTVLPNGIGRSIRVAVFTQGDNIAIAKDAGAELIGMEDLSEKIKKEGVDFDVVIATPDAMKIVTQLGQILGPRNLMPNTKLGTITTNIAEAIKNAKTGQVRYRNDKNGIIHATIGRINFHKNEIKENLNVFLESIKKAKPPQSKGIYIKKIVLSTTMGVGLMVDQSTLSL</sequence>
<reference key="1">
    <citation type="journal article" date="2009" name="Science">
        <title>The dynamics and time scale of ongoing genomic erosion in symbiotic bacteria.</title>
        <authorList>
            <person name="Moran N.A."/>
            <person name="McLaughlin H.J."/>
            <person name="Sorek R."/>
        </authorList>
    </citation>
    <scope>NUCLEOTIDE SEQUENCE [LARGE SCALE GENOMIC DNA]</scope>
    <source>
        <strain>5A</strain>
    </source>
</reference>
<gene>
    <name evidence="1" type="primary">rplA</name>
    <name type="ordered locus">BUAP5A_036</name>
</gene>
<proteinExistence type="inferred from homology"/>
<evidence type="ECO:0000255" key="1">
    <source>
        <dbReference type="HAMAP-Rule" id="MF_01318"/>
    </source>
</evidence>
<evidence type="ECO:0000305" key="2"/>
<keyword id="KW-0678">Repressor</keyword>
<keyword id="KW-0687">Ribonucleoprotein</keyword>
<keyword id="KW-0689">Ribosomal protein</keyword>
<keyword id="KW-0694">RNA-binding</keyword>
<keyword id="KW-0699">rRNA-binding</keyword>
<keyword id="KW-0810">Translation regulation</keyword>
<keyword id="KW-0820">tRNA-binding</keyword>
<protein>
    <recommendedName>
        <fullName evidence="1">Large ribosomal subunit protein uL1</fullName>
    </recommendedName>
    <alternativeName>
        <fullName evidence="2">50S ribosomal protein L1</fullName>
    </alternativeName>
</protein>
<feature type="chain" id="PRO_1000165665" description="Large ribosomal subunit protein uL1">
    <location>
        <begin position="1"/>
        <end position="231"/>
    </location>
</feature>
<name>RL1_BUCA5</name>
<accession>B8D8J9</accession>